<accession>G5EGA6</accession>
<feature type="chain" id="PRO_0000431306" description="Dehydrogenase/reductase SDR family member 4" evidence="6">
    <location>
        <begin position="1"/>
        <end position="260"/>
    </location>
</feature>
<feature type="active site" description="Proton acceptor" evidence="2">
    <location>
        <position position="161"/>
    </location>
</feature>
<feature type="binding site" evidence="2">
    <location>
        <begin position="14"/>
        <end position="38"/>
    </location>
    <ligand>
        <name>NADP(+)</name>
        <dbReference type="ChEBI" id="CHEBI:58349"/>
    </ligand>
</feature>
<feature type="binding site" evidence="1">
    <location>
        <position position="148"/>
    </location>
    <ligand>
        <name>substrate</name>
    </ligand>
</feature>
<feature type="binding site" evidence="2">
    <location>
        <position position="165"/>
    </location>
    <ligand>
        <name>NADP(+)</name>
        <dbReference type="ChEBI" id="CHEBI:58349"/>
    </ligand>
</feature>
<feature type="turn" evidence="10">
    <location>
        <begin position="7"/>
        <end position="10"/>
    </location>
</feature>
<feature type="strand" evidence="10">
    <location>
        <begin position="12"/>
        <end position="15"/>
    </location>
</feature>
<feature type="helix" evidence="10">
    <location>
        <begin position="21"/>
        <end position="32"/>
    </location>
</feature>
<feature type="strand" evidence="10">
    <location>
        <begin position="36"/>
        <end position="42"/>
    </location>
</feature>
<feature type="helix" evidence="10">
    <location>
        <begin position="44"/>
        <end position="56"/>
    </location>
</feature>
<feature type="strand" evidence="10">
    <location>
        <begin position="61"/>
        <end position="66"/>
    </location>
</feature>
<feature type="helix" evidence="10">
    <location>
        <begin position="72"/>
        <end position="86"/>
    </location>
</feature>
<feature type="strand" evidence="10">
    <location>
        <begin position="91"/>
        <end position="94"/>
    </location>
</feature>
<feature type="helix" evidence="10">
    <location>
        <begin position="105"/>
        <end position="107"/>
    </location>
</feature>
<feature type="helix" evidence="10">
    <location>
        <begin position="110"/>
        <end position="120"/>
    </location>
</feature>
<feature type="helix" evidence="10">
    <location>
        <begin position="122"/>
        <end position="137"/>
    </location>
</feature>
<feature type="strand" evidence="10">
    <location>
        <begin position="141"/>
        <end position="146"/>
    </location>
</feature>
<feature type="helix" evidence="10">
    <location>
        <begin position="149"/>
        <end position="151"/>
    </location>
</feature>
<feature type="helix" evidence="10">
    <location>
        <begin position="159"/>
        <end position="179"/>
    </location>
</feature>
<feature type="helix" evidence="10">
    <location>
        <begin position="180"/>
        <end position="182"/>
    </location>
</feature>
<feature type="strand" evidence="10">
    <location>
        <begin position="184"/>
        <end position="191"/>
    </location>
</feature>
<feature type="helix" evidence="10">
    <location>
        <begin position="197"/>
        <end position="203"/>
    </location>
</feature>
<feature type="turn" evidence="10">
    <location>
        <begin position="207"/>
        <end position="209"/>
    </location>
</feature>
<feature type="turn" evidence="10">
    <location>
        <begin position="212"/>
        <end position="218"/>
    </location>
</feature>
<feature type="helix" evidence="10">
    <location>
        <begin position="228"/>
        <end position="238"/>
    </location>
</feature>
<feature type="helix" evidence="10">
    <location>
        <begin position="240"/>
        <end position="242"/>
    </location>
</feature>
<feature type="strand" evidence="10">
    <location>
        <begin position="249"/>
        <end position="255"/>
    </location>
</feature>
<protein>
    <recommendedName>
        <fullName evidence="3">Dehydrogenase/reductase SDR family member 4</fullName>
        <ecNumber evidence="7">1.1.1.184</ecNumber>
    </recommendedName>
</protein>
<evidence type="ECO:0000250" key="1">
    <source>
        <dbReference type="UniProtKB" id="Q7Z4W1"/>
    </source>
</evidence>
<evidence type="ECO:0000250" key="2">
    <source>
        <dbReference type="UniProtKB" id="Q8WNV7"/>
    </source>
</evidence>
<evidence type="ECO:0000250" key="3">
    <source>
        <dbReference type="UniProtKB" id="Q9BTZ2"/>
    </source>
</evidence>
<evidence type="ECO:0000255" key="4"/>
<evidence type="ECO:0000269" key="5">
    <source>
    </source>
</evidence>
<evidence type="ECO:0000305" key="6"/>
<evidence type="ECO:0000305" key="7">
    <source>
    </source>
</evidence>
<evidence type="ECO:0000312" key="8">
    <source>
        <dbReference type="Proteomes" id="UP000001940"/>
    </source>
</evidence>
<evidence type="ECO:0000312" key="9">
    <source>
        <dbReference type="WormBase" id="F54F3.4"/>
    </source>
</evidence>
<evidence type="ECO:0007829" key="10">
    <source>
        <dbReference type="PDB" id="5OJI"/>
    </source>
</evidence>
<reference evidence="8" key="1">
    <citation type="journal article" date="1998" name="Science">
        <title>Genome sequence of the nematode C. elegans: a platform for investigating biology.</title>
        <authorList>
            <consortium name="The C. elegans sequencing consortium"/>
        </authorList>
    </citation>
    <scope>NUCLEOTIDE SEQUENCE [LARGE SCALE GENOMIC DNA]</scope>
    <source>
        <strain evidence="8">Bristol N2</strain>
    </source>
</reference>
<reference evidence="6" key="2">
    <citation type="journal article" date="2011" name="Chem. Biol. Interact.">
        <title>Bioinformatic and biochemical characterization of DCXR and DHRS2/4 from Caenorhabditis elegans.</title>
        <authorList>
            <person name="Kisiela M."/>
            <person name="El-Hawari Y."/>
            <person name="Martin H.J."/>
            <person name="Maser E."/>
        </authorList>
    </citation>
    <scope>FUNCTION</scope>
    <scope>CATALYTIC ACTIVITY</scope>
    <scope>BIOPHYSICOCHEMICAL PROPERTIES</scope>
</reference>
<proteinExistence type="evidence at protein level"/>
<dbReference type="EC" id="1.1.1.184" evidence="7"/>
<dbReference type="EMBL" id="Z79696">
    <property type="protein sequence ID" value="CAB01974.1"/>
    <property type="molecule type" value="Genomic_DNA"/>
</dbReference>
<dbReference type="EMBL" id="Z81592">
    <property type="protein sequence ID" value="CAB01974.1"/>
    <property type="status" value="JOINED"/>
    <property type="molecule type" value="Genomic_DNA"/>
</dbReference>
<dbReference type="PIR" id="T22676">
    <property type="entry name" value="T22676"/>
</dbReference>
<dbReference type="RefSeq" id="NP_506230.1">
    <property type="nucleotide sequence ID" value="NM_073829.6"/>
</dbReference>
<dbReference type="PDB" id="5OJG">
    <property type="method" value="X-ray"/>
    <property type="resolution" value="1.90 A"/>
    <property type="chains" value="A/B=1-260"/>
</dbReference>
<dbReference type="PDB" id="5OJI">
    <property type="method" value="X-ray"/>
    <property type="resolution" value="1.60 A"/>
    <property type="chains" value="A/B=1-260"/>
</dbReference>
<dbReference type="PDBsum" id="5OJG"/>
<dbReference type="PDBsum" id="5OJI"/>
<dbReference type="SMR" id="G5EGA6"/>
<dbReference type="BioGRID" id="44791">
    <property type="interactions" value="5"/>
</dbReference>
<dbReference type="FunCoup" id="G5EGA6">
    <property type="interactions" value="386"/>
</dbReference>
<dbReference type="STRING" id="6239.F54F3.4.1"/>
<dbReference type="PaxDb" id="6239-F54F3.4"/>
<dbReference type="PeptideAtlas" id="G5EGA6"/>
<dbReference type="EnsemblMetazoa" id="F54F3.4.1">
    <property type="protein sequence ID" value="F54F3.4.1"/>
    <property type="gene ID" value="WBGene00010063"/>
</dbReference>
<dbReference type="GeneID" id="179772"/>
<dbReference type="KEGG" id="cel:CELE_F54F3.4"/>
<dbReference type="AGR" id="WB:WBGene00010063"/>
<dbReference type="CTD" id="179772"/>
<dbReference type="WormBase" id="F54F3.4">
    <property type="protein sequence ID" value="CE19894"/>
    <property type="gene ID" value="WBGene00010063"/>
    <property type="gene designation" value="dhrs-4"/>
</dbReference>
<dbReference type="eggNOG" id="KOG0725">
    <property type="taxonomic scope" value="Eukaryota"/>
</dbReference>
<dbReference type="HOGENOM" id="CLU_010194_1_1_1"/>
<dbReference type="InParanoid" id="G5EGA6"/>
<dbReference type="OMA" id="FCDPLTM"/>
<dbReference type="OrthoDB" id="1669814at2759"/>
<dbReference type="PhylomeDB" id="G5EGA6"/>
<dbReference type="Reactome" id="R-CEL-5365859">
    <property type="pathway name" value="RA biosynthesis pathway"/>
</dbReference>
<dbReference type="Reactome" id="R-CEL-9033241">
    <property type="pathway name" value="Peroxisomal protein import"/>
</dbReference>
<dbReference type="SABIO-RK" id="G5EGA6"/>
<dbReference type="PRO" id="PR:G5EGA6"/>
<dbReference type="Proteomes" id="UP000001940">
    <property type="component" value="Chromosome V"/>
</dbReference>
<dbReference type="Bgee" id="WBGene00010063">
    <property type="expression patterns" value="Expressed in larva and 4 other cell types or tissues"/>
</dbReference>
<dbReference type="GO" id="GO:0004090">
    <property type="term" value="F:carbonyl reductase (NADPH) activity"/>
    <property type="evidence" value="ECO:0000314"/>
    <property type="project" value="UniProtKB"/>
</dbReference>
<dbReference type="GO" id="GO:0003824">
    <property type="term" value="F:catalytic activity"/>
    <property type="evidence" value="ECO:0000314"/>
    <property type="project" value="UniProtKB"/>
</dbReference>
<dbReference type="FunFam" id="3.40.50.720:FF:000084">
    <property type="entry name" value="Short-chain dehydrogenase reductase"/>
    <property type="match status" value="1"/>
</dbReference>
<dbReference type="Gene3D" id="3.40.50.720">
    <property type="entry name" value="NAD(P)-binding Rossmann-like Domain"/>
    <property type="match status" value="1"/>
</dbReference>
<dbReference type="InterPro" id="IPR036291">
    <property type="entry name" value="NAD(P)-bd_dom_sf"/>
</dbReference>
<dbReference type="InterPro" id="IPR002347">
    <property type="entry name" value="SDR_fam"/>
</dbReference>
<dbReference type="NCBIfam" id="NF005559">
    <property type="entry name" value="PRK07231.1"/>
    <property type="match status" value="1"/>
</dbReference>
<dbReference type="PANTHER" id="PTHR43943">
    <property type="entry name" value="DEHYDROGENASE/REDUCTASE (SDR FAMILY) MEMBER 4"/>
    <property type="match status" value="1"/>
</dbReference>
<dbReference type="PANTHER" id="PTHR43943:SF2">
    <property type="entry name" value="DEHYDROGENASE_REDUCTASE 4"/>
    <property type="match status" value="1"/>
</dbReference>
<dbReference type="Pfam" id="PF13561">
    <property type="entry name" value="adh_short_C2"/>
    <property type="match status" value="1"/>
</dbReference>
<dbReference type="PRINTS" id="PR00081">
    <property type="entry name" value="GDHRDH"/>
</dbReference>
<dbReference type="PRINTS" id="PR00080">
    <property type="entry name" value="SDRFAMILY"/>
</dbReference>
<dbReference type="SUPFAM" id="SSF51735">
    <property type="entry name" value="NAD(P)-binding Rossmann-fold domains"/>
    <property type="match status" value="1"/>
</dbReference>
<keyword id="KW-0002">3D-structure</keyword>
<keyword id="KW-0521">NADP</keyword>
<keyword id="KW-0560">Oxidoreductase</keyword>
<keyword id="KW-1185">Reference proteome</keyword>
<name>DHRS4_CAEEL</name>
<comment type="function">
    <text evidence="5">Catalyzes the reduction of isatin, 4-oxonon-2-enal, 9,10-phenanthrenequinone, menadione, 2,3-hexaenadione, 3,4-hexanedione and 2,3-heptanedione.</text>
</comment>
<comment type="catalytic activity">
    <reaction evidence="7">
        <text>a secondary alcohol + NADP(+) = a ketone + NADPH + H(+)</text>
        <dbReference type="Rhea" id="RHEA:19257"/>
        <dbReference type="ChEBI" id="CHEBI:15378"/>
        <dbReference type="ChEBI" id="CHEBI:17087"/>
        <dbReference type="ChEBI" id="CHEBI:35681"/>
        <dbReference type="ChEBI" id="CHEBI:57783"/>
        <dbReference type="ChEBI" id="CHEBI:58349"/>
        <dbReference type="EC" id="1.1.1.184"/>
    </reaction>
</comment>
<comment type="biophysicochemical properties">
    <kinetics>
        <KM evidence="5">0.12 mM for isatin (at 25 degrees Celsius)</KM>
    </kinetics>
</comment>
<comment type="similarity">
    <text evidence="4">Belongs to the short-chain dehydrogenases/reductases (SDR) family.</text>
</comment>
<gene>
    <name evidence="9" type="primary">dhrs-4</name>
    <name evidence="9" type="ORF">F54F3.4</name>
</gene>
<organism evidence="9">
    <name type="scientific">Caenorhabditis elegans</name>
    <dbReference type="NCBI Taxonomy" id="6239"/>
    <lineage>
        <taxon>Eukaryota</taxon>
        <taxon>Metazoa</taxon>
        <taxon>Ecdysozoa</taxon>
        <taxon>Nematoda</taxon>
        <taxon>Chromadorea</taxon>
        <taxon>Rhabditida</taxon>
        <taxon>Rhabditina</taxon>
        <taxon>Rhabditomorpha</taxon>
        <taxon>Rhabditoidea</taxon>
        <taxon>Rhabditidae</taxon>
        <taxon>Peloderinae</taxon>
        <taxon>Caenorhabditis</taxon>
    </lineage>
</organism>
<sequence length="260" mass="27590">MPSNCRRFEGKVAIVTAATKGIGLAIAERLLDEGASVVIGSRNQKNVDEAIEYLKNKGLTKVAGIAGHIASTDDQKKLVDFTLQKFGKINILVNNHGINPAFGHILEVSDQVWDKLFEVNVKAGFQMTKLVHPHIAKEGGGAIIFNASYSAYKSPPGIAAYGVTKTTLVGLTRALAMGLAKDNIRVNGIAPGVIKTKMSQVLWDGGEDAEKELTDIQEIALGRLGVPDDCAGTVAYLASDDSSYITGEMIIIAGGVQARL</sequence>